<comment type="function">
    <text evidence="1">Adapter protein able to interact with different proteins and involved in different biological processes. Mediates the interaction between the error-prone DNA polymerase zeta catalytic subunit rev3l and the inserter polymerase rev1, thereby mediating the second polymerase switching in translesion DNA synthesis. Translesion DNA synthesis releases the replication blockade of replicative polymerases, stalled in presence of DNA lesions. May also play a role in signal transduction in response to DNA damage. May regulate the activation of the anaphase promoting complex APC thereby regulating progression through the cell cycle. Through transcriptional regulation may play a role in epithelial-mesenchymal transdifferentiation (By similarity).</text>
</comment>
<comment type="subunit">
    <text evidence="1">Homooligomer. Interacts with rev1. Interacts with rev3l. Interacts with fzr1 (in complex with the anaphase promoting complex APC). May interact with cdc20 (By similarity).</text>
</comment>
<comment type="subcellular location">
    <subcellularLocation>
        <location evidence="1">Nucleus</location>
    </subcellularLocation>
    <subcellularLocation>
        <location evidence="1">Cytoplasm</location>
        <location evidence="1">Cytoskeleton</location>
        <location evidence="1">Spindle</location>
    </subcellularLocation>
    <subcellularLocation>
        <location evidence="1">Cytoplasm</location>
    </subcellularLocation>
</comment>
<evidence type="ECO:0000250" key="1"/>
<evidence type="ECO:0000255" key="2">
    <source>
        <dbReference type="PROSITE-ProRule" id="PRU00109"/>
    </source>
</evidence>
<sequence>MATLTRQDLNFGQVVADILCEFLEVAIHLILYVRDIYPSGIFQKRQKYNVPVQMSCHPQLNQYIQDTLHCVKPLIEKNEAEKVVVVIMNKEHHPVERFVFEISQPPLLAISSETLLSHVEQLLRAMILKISVCDAVLDSNPPGCTFTVLVHTREAATRNMEKVQVIKDFPWIVADEQEVHMEEAKLIPLKTMTSDILKMQLYVEEKTQKSS</sequence>
<reference key="1">
    <citation type="journal article" date="2013" name="Nature">
        <title>The zebrafish reference genome sequence and its relationship to the human genome.</title>
        <authorList>
            <person name="Howe K."/>
            <person name="Clark M.D."/>
            <person name="Torroja C.F."/>
            <person name="Torrance J."/>
            <person name="Berthelot C."/>
            <person name="Muffato M."/>
            <person name="Collins J.E."/>
            <person name="Humphray S."/>
            <person name="McLaren K."/>
            <person name="Matthews L."/>
            <person name="McLaren S."/>
            <person name="Sealy I."/>
            <person name="Caccamo M."/>
            <person name="Churcher C."/>
            <person name="Scott C."/>
            <person name="Barrett J.C."/>
            <person name="Koch R."/>
            <person name="Rauch G.J."/>
            <person name="White S."/>
            <person name="Chow W."/>
            <person name="Kilian B."/>
            <person name="Quintais L.T."/>
            <person name="Guerra-Assuncao J.A."/>
            <person name="Zhou Y."/>
            <person name="Gu Y."/>
            <person name="Yen J."/>
            <person name="Vogel J.H."/>
            <person name="Eyre T."/>
            <person name="Redmond S."/>
            <person name="Banerjee R."/>
            <person name="Chi J."/>
            <person name="Fu B."/>
            <person name="Langley E."/>
            <person name="Maguire S.F."/>
            <person name="Laird G.K."/>
            <person name="Lloyd D."/>
            <person name="Kenyon E."/>
            <person name="Donaldson S."/>
            <person name="Sehra H."/>
            <person name="Almeida-King J."/>
            <person name="Loveland J."/>
            <person name="Trevanion S."/>
            <person name="Jones M."/>
            <person name="Quail M."/>
            <person name="Willey D."/>
            <person name="Hunt A."/>
            <person name="Burton J."/>
            <person name="Sims S."/>
            <person name="McLay K."/>
            <person name="Plumb B."/>
            <person name="Davis J."/>
            <person name="Clee C."/>
            <person name="Oliver K."/>
            <person name="Clark R."/>
            <person name="Riddle C."/>
            <person name="Elliot D."/>
            <person name="Threadgold G."/>
            <person name="Harden G."/>
            <person name="Ware D."/>
            <person name="Begum S."/>
            <person name="Mortimore B."/>
            <person name="Kerry G."/>
            <person name="Heath P."/>
            <person name="Phillimore B."/>
            <person name="Tracey A."/>
            <person name="Corby N."/>
            <person name="Dunn M."/>
            <person name="Johnson C."/>
            <person name="Wood J."/>
            <person name="Clark S."/>
            <person name="Pelan S."/>
            <person name="Griffiths G."/>
            <person name="Smith M."/>
            <person name="Glithero R."/>
            <person name="Howden P."/>
            <person name="Barker N."/>
            <person name="Lloyd C."/>
            <person name="Stevens C."/>
            <person name="Harley J."/>
            <person name="Holt K."/>
            <person name="Panagiotidis G."/>
            <person name="Lovell J."/>
            <person name="Beasley H."/>
            <person name="Henderson C."/>
            <person name="Gordon D."/>
            <person name="Auger K."/>
            <person name="Wright D."/>
            <person name="Collins J."/>
            <person name="Raisen C."/>
            <person name="Dyer L."/>
            <person name="Leung K."/>
            <person name="Robertson L."/>
            <person name="Ambridge K."/>
            <person name="Leongamornlert D."/>
            <person name="McGuire S."/>
            <person name="Gilderthorp R."/>
            <person name="Griffiths C."/>
            <person name="Manthravadi D."/>
            <person name="Nichol S."/>
            <person name="Barker G."/>
            <person name="Whitehead S."/>
            <person name="Kay M."/>
            <person name="Brown J."/>
            <person name="Murnane C."/>
            <person name="Gray E."/>
            <person name="Humphries M."/>
            <person name="Sycamore N."/>
            <person name="Barker D."/>
            <person name="Saunders D."/>
            <person name="Wallis J."/>
            <person name="Babbage A."/>
            <person name="Hammond S."/>
            <person name="Mashreghi-Mohammadi M."/>
            <person name="Barr L."/>
            <person name="Martin S."/>
            <person name="Wray P."/>
            <person name="Ellington A."/>
            <person name="Matthews N."/>
            <person name="Ellwood M."/>
            <person name="Woodmansey R."/>
            <person name="Clark G."/>
            <person name="Cooper J."/>
            <person name="Tromans A."/>
            <person name="Grafham D."/>
            <person name="Skuce C."/>
            <person name="Pandian R."/>
            <person name="Andrews R."/>
            <person name="Harrison E."/>
            <person name="Kimberley A."/>
            <person name="Garnett J."/>
            <person name="Fosker N."/>
            <person name="Hall R."/>
            <person name="Garner P."/>
            <person name="Kelly D."/>
            <person name="Bird C."/>
            <person name="Palmer S."/>
            <person name="Gehring I."/>
            <person name="Berger A."/>
            <person name="Dooley C.M."/>
            <person name="Ersan-Urun Z."/>
            <person name="Eser C."/>
            <person name="Geiger H."/>
            <person name="Geisler M."/>
            <person name="Karotki L."/>
            <person name="Kirn A."/>
            <person name="Konantz J."/>
            <person name="Konantz M."/>
            <person name="Oberlander M."/>
            <person name="Rudolph-Geiger S."/>
            <person name="Teucke M."/>
            <person name="Lanz C."/>
            <person name="Raddatz G."/>
            <person name="Osoegawa K."/>
            <person name="Zhu B."/>
            <person name="Rapp A."/>
            <person name="Widaa S."/>
            <person name="Langford C."/>
            <person name="Yang F."/>
            <person name="Schuster S.C."/>
            <person name="Carter N.P."/>
            <person name="Harrow J."/>
            <person name="Ning Z."/>
            <person name="Herrero J."/>
            <person name="Searle S.M."/>
            <person name="Enright A."/>
            <person name="Geisler R."/>
            <person name="Plasterk R.H."/>
            <person name="Lee C."/>
            <person name="Westerfield M."/>
            <person name="de Jong P.J."/>
            <person name="Zon L.I."/>
            <person name="Postlethwait J.H."/>
            <person name="Nusslein-Volhard C."/>
            <person name="Hubbard T.J."/>
            <person name="Roest Crollius H."/>
            <person name="Rogers J."/>
            <person name="Stemple D.L."/>
        </authorList>
    </citation>
    <scope>NUCLEOTIDE SEQUENCE [LARGE SCALE GENOMIC DNA]</scope>
    <source>
        <strain>Tuebingen</strain>
    </source>
</reference>
<reference key="2">
    <citation type="submission" date="2005-04" db="EMBL/GenBank/DDBJ databases">
        <authorList>
            <consortium name="NIH - Zebrafish Gene Collection (ZGC) project"/>
        </authorList>
    </citation>
    <scope>NUCLEOTIDE SEQUENCE [LARGE SCALE MRNA]</scope>
    <source>
        <tissue>Olfactory epithelium</tissue>
    </source>
</reference>
<keyword id="KW-0131">Cell cycle</keyword>
<keyword id="KW-0132">Cell division</keyword>
<keyword id="KW-0963">Cytoplasm</keyword>
<keyword id="KW-0206">Cytoskeleton</keyword>
<keyword id="KW-0227">DNA damage</keyword>
<keyword id="KW-0498">Mitosis</keyword>
<keyword id="KW-0539">Nucleus</keyword>
<keyword id="KW-1185">Reference proteome</keyword>
<keyword id="KW-0804">Transcription</keyword>
<keyword id="KW-0805">Transcription regulation</keyword>
<protein>
    <recommendedName>
        <fullName>Mitotic spindle assembly checkpoint protein MAD2B</fullName>
    </recommendedName>
    <alternativeName>
        <fullName>Mitotic arrest deficient 2-like protein 2</fullName>
        <shortName>MAD2-like protein 2</shortName>
    </alternativeName>
</protein>
<gene>
    <name type="primary">mad2l2</name>
    <name type="ORF">si:dkey-23c22.2</name>
    <name type="ORF">zgc:110299</name>
</gene>
<organism>
    <name type="scientific">Danio rerio</name>
    <name type="common">Zebrafish</name>
    <name type="synonym">Brachydanio rerio</name>
    <dbReference type="NCBI Taxonomy" id="7955"/>
    <lineage>
        <taxon>Eukaryota</taxon>
        <taxon>Metazoa</taxon>
        <taxon>Chordata</taxon>
        <taxon>Craniata</taxon>
        <taxon>Vertebrata</taxon>
        <taxon>Euteleostomi</taxon>
        <taxon>Actinopterygii</taxon>
        <taxon>Neopterygii</taxon>
        <taxon>Teleostei</taxon>
        <taxon>Ostariophysi</taxon>
        <taxon>Cypriniformes</taxon>
        <taxon>Danionidae</taxon>
        <taxon>Danioninae</taxon>
        <taxon>Danio</taxon>
    </lineage>
</organism>
<name>MD2L2_DANRE</name>
<feature type="chain" id="PRO_0000405246" description="Mitotic spindle assembly checkpoint protein MAD2B">
    <location>
        <begin position="1"/>
        <end position="211"/>
    </location>
</feature>
<feature type="domain" description="HORMA" evidence="2">
    <location>
        <begin position="13"/>
        <end position="203"/>
    </location>
</feature>
<dbReference type="EMBL" id="CT737125">
    <property type="protein sequence ID" value="CAQ13963.1"/>
    <property type="molecule type" value="Genomic_DNA"/>
</dbReference>
<dbReference type="EMBL" id="BC092858">
    <property type="protein sequence ID" value="AAH92858.1"/>
    <property type="molecule type" value="mRNA"/>
</dbReference>
<dbReference type="RefSeq" id="NP_001017595.1">
    <property type="nucleotide sequence ID" value="NM_001017595.1"/>
</dbReference>
<dbReference type="RefSeq" id="XP_005167091.1">
    <property type="nucleotide sequence ID" value="XM_005167034.5"/>
</dbReference>
<dbReference type="SMR" id="Q568H3"/>
<dbReference type="FunCoup" id="Q568H3">
    <property type="interactions" value="807"/>
</dbReference>
<dbReference type="STRING" id="7955.ENSDARP00000062253"/>
<dbReference type="PaxDb" id="7955-ENSDARP00000013423"/>
<dbReference type="Ensembl" id="ENSDART00000062254">
    <property type="protein sequence ID" value="ENSDARP00000062253"/>
    <property type="gene ID" value="ENSDARG00000042456"/>
</dbReference>
<dbReference type="GeneID" id="550258"/>
<dbReference type="KEGG" id="dre:550258"/>
<dbReference type="AGR" id="ZFIN:ZDB-GENE-050417-61"/>
<dbReference type="CTD" id="10459"/>
<dbReference type="ZFIN" id="ZDB-GENE-050417-61">
    <property type="gene designation" value="mad2l2"/>
</dbReference>
<dbReference type="eggNOG" id="KOG3186">
    <property type="taxonomic scope" value="Eukaryota"/>
</dbReference>
<dbReference type="HOGENOM" id="CLU_050394_2_0_1"/>
<dbReference type="InParanoid" id="Q568H3"/>
<dbReference type="OMA" id="CEDFPWI"/>
<dbReference type="OrthoDB" id="21254at2759"/>
<dbReference type="PhylomeDB" id="Q568H3"/>
<dbReference type="TreeFam" id="TF101085"/>
<dbReference type="Reactome" id="R-DRE-5656121">
    <property type="pathway name" value="Translesion synthesis by POLI"/>
</dbReference>
<dbReference type="PRO" id="PR:Q568H3"/>
<dbReference type="Proteomes" id="UP000000437">
    <property type="component" value="Chromosome 8"/>
</dbReference>
<dbReference type="Bgee" id="ENSDARG00000042456">
    <property type="expression patterns" value="Expressed in testis and 26 other cell types or tissues"/>
</dbReference>
<dbReference type="GO" id="GO:0005737">
    <property type="term" value="C:cytoplasm"/>
    <property type="evidence" value="ECO:0007669"/>
    <property type="project" value="UniProtKB-SubCell"/>
</dbReference>
<dbReference type="GO" id="GO:0005634">
    <property type="term" value="C:nucleus"/>
    <property type="evidence" value="ECO:0000250"/>
    <property type="project" value="UniProtKB"/>
</dbReference>
<dbReference type="GO" id="GO:0005819">
    <property type="term" value="C:spindle"/>
    <property type="evidence" value="ECO:0000250"/>
    <property type="project" value="UniProtKB"/>
</dbReference>
<dbReference type="GO" id="GO:0016035">
    <property type="term" value="C:zeta DNA polymerase complex"/>
    <property type="evidence" value="ECO:0000250"/>
    <property type="project" value="UniProtKB"/>
</dbReference>
<dbReference type="GO" id="GO:0051301">
    <property type="term" value="P:cell division"/>
    <property type="evidence" value="ECO:0007669"/>
    <property type="project" value="UniProtKB-KW"/>
</dbReference>
<dbReference type="GO" id="GO:0042772">
    <property type="term" value="P:DNA damage response, signal transduction resulting in transcription"/>
    <property type="evidence" value="ECO:0000250"/>
    <property type="project" value="UniProtKB"/>
</dbReference>
<dbReference type="GO" id="GO:0042177">
    <property type="term" value="P:negative regulation of protein catabolic process"/>
    <property type="evidence" value="ECO:0000250"/>
    <property type="project" value="UniProtKB"/>
</dbReference>
<dbReference type="GO" id="GO:1904667">
    <property type="term" value="P:negative regulation of ubiquitin protein ligase activity"/>
    <property type="evidence" value="ECO:0000250"/>
    <property type="project" value="UniProtKB"/>
</dbReference>
<dbReference type="GO" id="GO:0045893">
    <property type="term" value="P:positive regulation of DNA-templated transcription"/>
    <property type="evidence" value="ECO:0000250"/>
    <property type="project" value="UniProtKB"/>
</dbReference>
<dbReference type="GO" id="GO:0033138">
    <property type="term" value="P:positive regulation of peptidyl-serine phosphorylation"/>
    <property type="evidence" value="ECO:0000250"/>
    <property type="project" value="UniProtKB"/>
</dbReference>
<dbReference type="FunFam" id="3.30.900.10:FF:000003">
    <property type="entry name" value="Mitotic spindle assembly checkpoint protein MAD2B"/>
    <property type="match status" value="1"/>
</dbReference>
<dbReference type="Gene3D" id="3.30.900.10">
    <property type="entry name" value="HORMA domain"/>
    <property type="match status" value="1"/>
</dbReference>
<dbReference type="InterPro" id="IPR003511">
    <property type="entry name" value="HORMA_dom"/>
</dbReference>
<dbReference type="InterPro" id="IPR036570">
    <property type="entry name" value="HORMA_dom_sf"/>
</dbReference>
<dbReference type="InterPro" id="IPR045091">
    <property type="entry name" value="Mad2-like"/>
</dbReference>
<dbReference type="PANTHER" id="PTHR11842">
    <property type="entry name" value="MITOTIC SPINDLE ASSEMBLY CHECKPOINT PROTEIN MAD2"/>
    <property type="match status" value="1"/>
</dbReference>
<dbReference type="PANTHER" id="PTHR11842:SF10">
    <property type="entry name" value="MITOTIC SPINDLE ASSEMBLY CHECKPOINT PROTEIN MAD2B"/>
    <property type="match status" value="1"/>
</dbReference>
<dbReference type="Pfam" id="PF02301">
    <property type="entry name" value="HORMA"/>
    <property type="match status" value="1"/>
</dbReference>
<dbReference type="SUPFAM" id="SSF56019">
    <property type="entry name" value="The spindle assembly checkpoint protein mad2"/>
    <property type="match status" value="1"/>
</dbReference>
<dbReference type="PROSITE" id="PS50815">
    <property type="entry name" value="HORMA"/>
    <property type="match status" value="1"/>
</dbReference>
<accession>Q568H3</accession>
<proteinExistence type="evidence at transcript level"/>